<comment type="function">
    <text evidence="2">May act as a regulator of myogenesis (By similarity). Promotes the repair of DNA double-strand breaks (DSBs) through the homologous recombination pathway by facilitating the recruitment of the DNA endonuclease RBBP8 to the DSBs (By similarity).</text>
</comment>
<comment type="subcellular location">
    <subcellularLocation>
        <location evidence="1">Nucleus</location>
    </subcellularLocation>
    <subcellularLocation>
        <location evidence="3">Cytoplasm</location>
    </subcellularLocation>
</comment>
<comment type="similarity">
    <text evidence="7">Belongs to the HDGF family.</text>
</comment>
<reference key="1">
    <citation type="journal article" date="2004" name="J. Biol. Chem.">
        <title>Identification of an evolutionarily conserved domain in human lens epithelium-derived growth factor/transcriptional co-activator p75 (LEDGF/p75) that binds HIV-1 integrase.</title>
        <authorList>
            <person name="Cherepanov P."/>
            <person name="Devroe E."/>
            <person name="Silver P.A."/>
            <person name="Engelman A."/>
        </authorList>
    </citation>
    <scope>NUCLEOTIDE SEQUENCE [MRNA]</scope>
    <source>
        <tissue>Kidney</tissue>
    </source>
</reference>
<reference key="2">
    <citation type="journal article" date="2013" name="Nature">
        <title>The zebrafish reference genome sequence and its relationship to the human genome.</title>
        <authorList>
            <person name="Howe K."/>
            <person name="Clark M.D."/>
            <person name="Torroja C.F."/>
            <person name="Torrance J."/>
            <person name="Berthelot C."/>
            <person name="Muffato M."/>
            <person name="Collins J.E."/>
            <person name="Humphray S."/>
            <person name="McLaren K."/>
            <person name="Matthews L."/>
            <person name="McLaren S."/>
            <person name="Sealy I."/>
            <person name="Caccamo M."/>
            <person name="Churcher C."/>
            <person name="Scott C."/>
            <person name="Barrett J.C."/>
            <person name="Koch R."/>
            <person name="Rauch G.J."/>
            <person name="White S."/>
            <person name="Chow W."/>
            <person name="Kilian B."/>
            <person name="Quintais L.T."/>
            <person name="Guerra-Assuncao J.A."/>
            <person name="Zhou Y."/>
            <person name="Gu Y."/>
            <person name="Yen J."/>
            <person name="Vogel J.H."/>
            <person name="Eyre T."/>
            <person name="Redmond S."/>
            <person name="Banerjee R."/>
            <person name="Chi J."/>
            <person name="Fu B."/>
            <person name="Langley E."/>
            <person name="Maguire S.F."/>
            <person name="Laird G.K."/>
            <person name="Lloyd D."/>
            <person name="Kenyon E."/>
            <person name="Donaldson S."/>
            <person name="Sehra H."/>
            <person name="Almeida-King J."/>
            <person name="Loveland J."/>
            <person name="Trevanion S."/>
            <person name="Jones M."/>
            <person name="Quail M."/>
            <person name="Willey D."/>
            <person name="Hunt A."/>
            <person name="Burton J."/>
            <person name="Sims S."/>
            <person name="McLay K."/>
            <person name="Plumb B."/>
            <person name="Davis J."/>
            <person name="Clee C."/>
            <person name="Oliver K."/>
            <person name="Clark R."/>
            <person name="Riddle C."/>
            <person name="Elliot D."/>
            <person name="Threadgold G."/>
            <person name="Harden G."/>
            <person name="Ware D."/>
            <person name="Begum S."/>
            <person name="Mortimore B."/>
            <person name="Kerry G."/>
            <person name="Heath P."/>
            <person name="Phillimore B."/>
            <person name="Tracey A."/>
            <person name="Corby N."/>
            <person name="Dunn M."/>
            <person name="Johnson C."/>
            <person name="Wood J."/>
            <person name="Clark S."/>
            <person name="Pelan S."/>
            <person name="Griffiths G."/>
            <person name="Smith M."/>
            <person name="Glithero R."/>
            <person name="Howden P."/>
            <person name="Barker N."/>
            <person name="Lloyd C."/>
            <person name="Stevens C."/>
            <person name="Harley J."/>
            <person name="Holt K."/>
            <person name="Panagiotidis G."/>
            <person name="Lovell J."/>
            <person name="Beasley H."/>
            <person name="Henderson C."/>
            <person name="Gordon D."/>
            <person name="Auger K."/>
            <person name="Wright D."/>
            <person name="Collins J."/>
            <person name="Raisen C."/>
            <person name="Dyer L."/>
            <person name="Leung K."/>
            <person name="Robertson L."/>
            <person name="Ambridge K."/>
            <person name="Leongamornlert D."/>
            <person name="McGuire S."/>
            <person name="Gilderthorp R."/>
            <person name="Griffiths C."/>
            <person name="Manthravadi D."/>
            <person name="Nichol S."/>
            <person name="Barker G."/>
            <person name="Whitehead S."/>
            <person name="Kay M."/>
            <person name="Brown J."/>
            <person name="Murnane C."/>
            <person name="Gray E."/>
            <person name="Humphries M."/>
            <person name="Sycamore N."/>
            <person name="Barker D."/>
            <person name="Saunders D."/>
            <person name="Wallis J."/>
            <person name="Babbage A."/>
            <person name="Hammond S."/>
            <person name="Mashreghi-Mohammadi M."/>
            <person name="Barr L."/>
            <person name="Martin S."/>
            <person name="Wray P."/>
            <person name="Ellington A."/>
            <person name="Matthews N."/>
            <person name="Ellwood M."/>
            <person name="Woodmansey R."/>
            <person name="Clark G."/>
            <person name="Cooper J."/>
            <person name="Tromans A."/>
            <person name="Grafham D."/>
            <person name="Skuce C."/>
            <person name="Pandian R."/>
            <person name="Andrews R."/>
            <person name="Harrison E."/>
            <person name="Kimberley A."/>
            <person name="Garnett J."/>
            <person name="Fosker N."/>
            <person name="Hall R."/>
            <person name="Garner P."/>
            <person name="Kelly D."/>
            <person name="Bird C."/>
            <person name="Palmer S."/>
            <person name="Gehring I."/>
            <person name="Berger A."/>
            <person name="Dooley C.M."/>
            <person name="Ersan-Urun Z."/>
            <person name="Eser C."/>
            <person name="Geiger H."/>
            <person name="Geisler M."/>
            <person name="Karotki L."/>
            <person name="Kirn A."/>
            <person name="Konantz J."/>
            <person name="Konantz M."/>
            <person name="Oberlander M."/>
            <person name="Rudolph-Geiger S."/>
            <person name="Teucke M."/>
            <person name="Lanz C."/>
            <person name="Raddatz G."/>
            <person name="Osoegawa K."/>
            <person name="Zhu B."/>
            <person name="Rapp A."/>
            <person name="Widaa S."/>
            <person name="Langford C."/>
            <person name="Yang F."/>
            <person name="Schuster S.C."/>
            <person name="Carter N.P."/>
            <person name="Harrow J."/>
            <person name="Ning Z."/>
            <person name="Herrero J."/>
            <person name="Searle S.M."/>
            <person name="Enright A."/>
            <person name="Geisler R."/>
            <person name="Plasterk R.H."/>
            <person name="Lee C."/>
            <person name="Westerfield M."/>
            <person name="de Jong P.J."/>
            <person name="Zon L.I."/>
            <person name="Postlethwait J.H."/>
            <person name="Nusslein-Volhard C."/>
            <person name="Hubbard T.J."/>
            <person name="Roest Crollius H."/>
            <person name="Rogers J."/>
            <person name="Stemple D.L."/>
        </authorList>
    </citation>
    <scope>NUCLEOTIDE SEQUENCE [LARGE SCALE GENOMIC DNA]</scope>
    <source>
        <strain>Tuebingen</strain>
    </source>
</reference>
<reference key="3">
    <citation type="submission" date="2003-01" db="EMBL/GenBank/DDBJ databases">
        <authorList>
            <consortium name="NIH - Zebrafish Gene Collection (ZGC) project"/>
        </authorList>
    </citation>
    <scope>NUCLEOTIDE SEQUENCE [LARGE SCALE MRNA] OF 1-417</scope>
    <source>
        <strain>AB</strain>
    </source>
</reference>
<gene>
    <name type="primary">hdgfl2</name>
    <name type="synonym">hdgfrp2</name>
    <name type="ORF">si:ch211-232a14.3</name>
    <name type="ORF">zgc:66215</name>
</gene>
<organism>
    <name type="scientific">Danio rerio</name>
    <name type="common">Zebrafish</name>
    <name type="synonym">Brachydanio rerio</name>
    <dbReference type="NCBI Taxonomy" id="7955"/>
    <lineage>
        <taxon>Eukaryota</taxon>
        <taxon>Metazoa</taxon>
        <taxon>Chordata</taxon>
        <taxon>Craniata</taxon>
        <taxon>Vertebrata</taxon>
        <taxon>Euteleostomi</taxon>
        <taxon>Actinopterygii</taxon>
        <taxon>Neopterygii</taxon>
        <taxon>Teleostei</taxon>
        <taxon>Ostariophysi</taxon>
        <taxon>Cypriniformes</taxon>
        <taxon>Danionidae</taxon>
        <taxon>Danioninae</taxon>
        <taxon>Danio</taxon>
    </lineage>
</organism>
<proteinExistence type="evidence at transcript level"/>
<evidence type="ECO:0000250" key="1">
    <source>
        <dbReference type="UniProtKB" id="Q3UMU9"/>
    </source>
</evidence>
<evidence type="ECO:0000250" key="2">
    <source>
        <dbReference type="UniProtKB" id="Q7Z4V5"/>
    </source>
</evidence>
<evidence type="ECO:0000250" key="3">
    <source>
        <dbReference type="UniProtKB" id="Q925G1"/>
    </source>
</evidence>
<evidence type="ECO:0000255" key="4"/>
<evidence type="ECO:0000255" key="5">
    <source>
        <dbReference type="PROSITE-ProRule" id="PRU00162"/>
    </source>
</evidence>
<evidence type="ECO:0000256" key="6">
    <source>
        <dbReference type="SAM" id="MobiDB-lite"/>
    </source>
</evidence>
<evidence type="ECO:0000305" key="7"/>
<keyword id="KW-0175">Coiled coil</keyword>
<keyword id="KW-0963">Cytoplasm</keyword>
<keyword id="KW-0227">DNA damage</keyword>
<keyword id="KW-0233">DNA recombination</keyword>
<keyword id="KW-0234">DNA repair</keyword>
<keyword id="KW-0517">Myogenesis</keyword>
<keyword id="KW-0539">Nucleus</keyword>
<keyword id="KW-1185">Reference proteome</keyword>
<feature type="chain" id="PRO_0000317646" description="Hepatoma-derived growth factor-related protein 2">
    <location>
        <begin position="1"/>
        <end position="662"/>
    </location>
</feature>
<feature type="domain" description="PWWP" evidence="5">
    <location>
        <begin position="7"/>
        <end position="64"/>
    </location>
</feature>
<feature type="region of interest" description="Disordered" evidence="6">
    <location>
        <begin position="84"/>
        <end position="484"/>
    </location>
</feature>
<feature type="region of interest" description="Disordered" evidence="6">
    <location>
        <begin position="561"/>
        <end position="662"/>
    </location>
</feature>
<feature type="coiled-coil region" evidence="4">
    <location>
        <begin position="320"/>
        <end position="370"/>
    </location>
</feature>
<feature type="compositionally biased region" description="Polar residues" evidence="6">
    <location>
        <begin position="84"/>
        <end position="101"/>
    </location>
</feature>
<feature type="compositionally biased region" description="Basic residues" evidence="6">
    <location>
        <begin position="143"/>
        <end position="161"/>
    </location>
</feature>
<feature type="compositionally biased region" description="Low complexity" evidence="6">
    <location>
        <begin position="172"/>
        <end position="186"/>
    </location>
</feature>
<feature type="compositionally biased region" description="Basic residues" evidence="6">
    <location>
        <begin position="206"/>
        <end position="219"/>
    </location>
</feature>
<feature type="compositionally biased region" description="Low complexity" evidence="6">
    <location>
        <begin position="220"/>
        <end position="233"/>
    </location>
</feature>
<feature type="compositionally biased region" description="Basic and acidic residues" evidence="6">
    <location>
        <begin position="234"/>
        <end position="246"/>
    </location>
</feature>
<feature type="compositionally biased region" description="Low complexity" evidence="6">
    <location>
        <begin position="247"/>
        <end position="259"/>
    </location>
</feature>
<feature type="compositionally biased region" description="Pro residues" evidence="6">
    <location>
        <begin position="265"/>
        <end position="274"/>
    </location>
</feature>
<feature type="compositionally biased region" description="Basic residues" evidence="6">
    <location>
        <begin position="277"/>
        <end position="296"/>
    </location>
</feature>
<feature type="compositionally biased region" description="Basic and acidic residues" evidence="6">
    <location>
        <begin position="314"/>
        <end position="366"/>
    </location>
</feature>
<feature type="compositionally biased region" description="Pro residues" evidence="6">
    <location>
        <begin position="393"/>
        <end position="410"/>
    </location>
</feature>
<feature type="compositionally biased region" description="Basic and acidic residues" evidence="6">
    <location>
        <begin position="411"/>
        <end position="456"/>
    </location>
</feature>
<feature type="compositionally biased region" description="Basic and acidic residues" evidence="6">
    <location>
        <begin position="464"/>
        <end position="484"/>
    </location>
</feature>
<feature type="compositionally biased region" description="Basic and acidic residues" evidence="6">
    <location>
        <begin position="562"/>
        <end position="574"/>
    </location>
</feature>
<feature type="compositionally biased region" description="Basic and acidic residues" evidence="6">
    <location>
        <begin position="645"/>
        <end position="655"/>
    </location>
</feature>
<feature type="sequence conflict" description="In Ref. 1; AAU44351 and 3; AAH44157." evidence="7" ref="1 3">
    <original>L</original>
    <variation>P</variation>
    <location>
        <position position="152"/>
    </location>
</feature>
<feature type="sequence conflict" description="In Ref. 3; AAH44157." evidence="7" ref="3">
    <original>I</original>
    <variation>T</variation>
    <location>
        <position position="398"/>
    </location>
</feature>
<feature type="sequence conflict" description="In Ref. 3; AAH44157." evidence="7" ref="3">
    <original>S</original>
    <variation>F</variation>
    <location>
        <position position="402"/>
    </location>
</feature>
<feature type="sequence conflict" description="In Ref. 3; AAH44157." evidence="7" ref="3">
    <original>E</original>
    <variation>K</variation>
    <location>
        <position position="417"/>
    </location>
</feature>
<feature type="sequence conflict" description="In Ref. 1; AAU44351." evidence="7" ref="1">
    <original>V</original>
    <variation>I</variation>
    <location>
        <position position="437"/>
    </location>
</feature>
<feature type="sequence conflict" description="In Ref. 1; AAU44351." evidence="7" ref="1">
    <original>A</original>
    <variation>P</variation>
    <location>
        <position position="455"/>
    </location>
</feature>
<sequence>MPHNFRPGDLVFAKMKGYPHWPARIEDVADGAVKPPPNKIPIFFFGTHETAFLAPKDLFAYEKNQERFGKPNKRKGFNEGLWEIQNNPHASYNTPAAASSSDSEDNQPAAASDAEEEEEAVVPRKAETGSDDSDSGSEDQKKPAVKRKAPALKRPPVKKARASSSDRDGEESGSPSEPEPSPSSDSDSGKNSDQDFTPQKESGGRGGKKPAGRGRRKKASSGSDSDSGSQSDQKAARSDSEDEKPRPAASGSESQSGSKSDSDSEPPPPPPPTRKAPQGRKKAEKPPPKPRARKPKPAPERAPSSSSDSDSDSDTDRVSEWKKRDEERRKELEERRKREEAEELRRLREREKEEEEKRKKDKETKVRRGSSSSGSSSSDDEVDDHPLKKSKKPPPPPIPAPSDSDSPPPSELKKKKESQKGRQKKEKEVKEKKERPVKEKKPQRSEEKHKAKPKAEKPKRKPVRPPEKKVEKKKEPSPEEKLQKLHTDIKFALKVDNPDIEKCLQALDELSSVQVTTHILQKNADVIATLKKIRRYKASNAVMEKATAVYNKLKLQFIGKIETGKPKPNEKNQEEQDAQNTDDSKPVNGESEGERKDVSESESNSKPTDQDNPDENKSPNGIRPDPDEPADQLNDSTEADPTADADVKEDSREQDEQMSSES</sequence>
<name>HDGR2_DANRE</name>
<dbReference type="EMBL" id="AY728142">
    <property type="protein sequence ID" value="AAU44351.1"/>
    <property type="molecule type" value="mRNA"/>
</dbReference>
<dbReference type="EMBL" id="BX005201">
    <property type="protein sequence ID" value="CAX13226.1"/>
    <property type="molecule type" value="Genomic_DNA"/>
</dbReference>
<dbReference type="EMBL" id="CU207239">
    <property type="protein sequence ID" value="CAX13226.1"/>
    <property type="status" value="JOINED"/>
    <property type="molecule type" value="Genomic_DNA"/>
</dbReference>
<dbReference type="EMBL" id="BC044157">
    <property type="protein sequence ID" value="AAH44157.1"/>
    <property type="molecule type" value="mRNA"/>
</dbReference>
<dbReference type="RefSeq" id="NP_001002037.2">
    <property type="nucleotide sequence ID" value="NM_001002037.2"/>
</dbReference>
<dbReference type="SMR" id="Q5XXA7"/>
<dbReference type="STRING" id="7955.ENSDARP00000103259"/>
<dbReference type="PaxDb" id="7955-ENSDARP00000103259"/>
<dbReference type="GeneID" id="80965"/>
<dbReference type="KEGG" id="dre:80965"/>
<dbReference type="AGR" id="ZFIN:ZDB-GENE-040426-2104"/>
<dbReference type="CTD" id="84717"/>
<dbReference type="ZFIN" id="ZDB-GENE-040426-2104">
    <property type="gene designation" value="hdgfl2"/>
</dbReference>
<dbReference type="eggNOG" id="KOG1904">
    <property type="taxonomic scope" value="Eukaryota"/>
</dbReference>
<dbReference type="InParanoid" id="Q5XXA7"/>
<dbReference type="OrthoDB" id="62853at2759"/>
<dbReference type="PhylomeDB" id="Q5XXA7"/>
<dbReference type="PRO" id="PR:Q5XXA7"/>
<dbReference type="Proteomes" id="UP000000437">
    <property type="component" value="Alternate scaffold 22"/>
</dbReference>
<dbReference type="Proteomes" id="UP000000437">
    <property type="component" value="Chromosome 22"/>
</dbReference>
<dbReference type="GO" id="GO:0005737">
    <property type="term" value="C:cytoplasm"/>
    <property type="evidence" value="ECO:0000250"/>
    <property type="project" value="UniProtKB"/>
</dbReference>
<dbReference type="GO" id="GO:0005634">
    <property type="term" value="C:nucleus"/>
    <property type="evidence" value="ECO:0000250"/>
    <property type="project" value="UniProtKB"/>
</dbReference>
<dbReference type="GO" id="GO:0061628">
    <property type="term" value="F:histone H3K27me3 reader activity"/>
    <property type="evidence" value="ECO:0000318"/>
    <property type="project" value="GO_Central"/>
</dbReference>
<dbReference type="GO" id="GO:0062072">
    <property type="term" value="F:histone H3K9me2/3 reader activity"/>
    <property type="evidence" value="ECO:0000318"/>
    <property type="project" value="GO_Central"/>
</dbReference>
<dbReference type="GO" id="GO:0006338">
    <property type="term" value="P:chromatin remodeling"/>
    <property type="evidence" value="ECO:0000318"/>
    <property type="project" value="GO_Central"/>
</dbReference>
<dbReference type="GO" id="GO:0006310">
    <property type="term" value="P:DNA recombination"/>
    <property type="evidence" value="ECO:0007669"/>
    <property type="project" value="UniProtKB-KW"/>
</dbReference>
<dbReference type="GO" id="GO:0006281">
    <property type="term" value="P:DNA repair"/>
    <property type="evidence" value="ECO:0007669"/>
    <property type="project" value="UniProtKB-KW"/>
</dbReference>
<dbReference type="GO" id="GO:0007517">
    <property type="term" value="P:muscle organ development"/>
    <property type="evidence" value="ECO:0007669"/>
    <property type="project" value="UniProtKB-KW"/>
</dbReference>
<dbReference type="GO" id="GO:1905168">
    <property type="term" value="P:positive regulation of double-strand break repair via homologous recombination"/>
    <property type="evidence" value="ECO:0000250"/>
    <property type="project" value="UniProtKB"/>
</dbReference>
<dbReference type="CDD" id="cd20149">
    <property type="entry name" value="PWWP_HDGFL2"/>
    <property type="match status" value="1"/>
</dbReference>
<dbReference type="FunFam" id="2.30.30.140:FF:000017">
    <property type="entry name" value="hepatoma-derived growth factor isoform X1"/>
    <property type="match status" value="1"/>
</dbReference>
<dbReference type="Gene3D" id="2.30.30.140">
    <property type="match status" value="1"/>
</dbReference>
<dbReference type="Gene3D" id="1.20.930.10">
    <property type="entry name" value="Conserved domain common to transcription factors TFIIS, elongin A, CRSP70"/>
    <property type="match status" value="1"/>
</dbReference>
<dbReference type="InterPro" id="IPR036218">
    <property type="entry name" value="HIVI-bd_sf"/>
</dbReference>
<dbReference type="InterPro" id="IPR021567">
    <property type="entry name" value="LEDGF_IBD"/>
</dbReference>
<dbReference type="InterPro" id="IPR000313">
    <property type="entry name" value="PWWP_dom"/>
</dbReference>
<dbReference type="InterPro" id="IPR035441">
    <property type="entry name" value="TFIIS/LEDGF_dom_sf"/>
</dbReference>
<dbReference type="PANTHER" id="PTHR12550">
    <property type="entry name" value="HEPATOMA-DERIVED GROWTH FACTOR-RELATED"/>
    <property type="match status" value="1"/>
</dbReference>
<dbReference type="PANTHER" id="PTHR12550:SF18">
    <property type="entry name" value="HEPATOMA-DERIVED GROWTH FACTOR-RELATED PROTEIN 2"/>
    <property type="match status" value="1"/>
</dbReference>
<dbReference type="Pfam" id="PF11467">
    <property type="entry name" value="LEDGF"/>
    <property type="match status" value="1"/>
</dbReference>
<dbReference type="Pfam" id="PF00855">
    <property type="entry name" value="PWWP"/>
    <property type="match status" value="1"/>
</dbReference>
<dbReference type="SMART" id="SM00293">
    <property type="entry name" value="PWWP"/>
    <property type="match status" value="1"/>
</dbReference>
<dbReference type="SUPFAM" id="SSF140576">
    <property type="entry name" value="HIV integrase-binding domain"/>
    <property type="match status" value="1"/>
</dbReference>
<dbReference type="SUPFAM" id="SSF63748">
    <property type="entry name" value="Tudor/PWWP/MBT"/>
    <property type="match status" value="1"/>
</dbReference>
<dbReference type="PROSITE" id="PS50812">
    <property type="entry name" value="PWWP"/>
    <property type="match status" value="1"/>
</dbReference>
<protein>
    <recommendedName>
        <fullName>Hepatoma-derived growth factor-related protein 2</fullName>
        <shortName>HRP-2</shortName>
    </recommendedName>
</protein>
<accession>Q5XXA7</accession>
<accession>B8A4B6</accession>
<accession>Q1LYH9</accession>
<accession>Q803X2</accession>